<gene>
    <name evidence="1" type="primary">ndk</name>
    <name type="ordered locus">str0906</name>
</gene>
<protein>
    <recommendedName>
        <fullName evidence="1">Nucleoside diphosphate kinase</fullName>
        <shortName evidence="1">NDK</shortName>
        <shortName evidence="1">NDP kinase</shortName>
        <ecNumber evidence="1">2.7.4.6</ecNumber>
    </recommendedName>
    <alternativeName>
        <fullName evidence="1">Nucleoside-2-P kinase</fullName>
    </alternativeName>
</protein>
<dbReference type="EC" id="2.7.4.6" evidence="1"/>
<dbReference type="EMBL" id="CP000024">
    <property type="protein sequence ID" value="AAV62492.1"/>
    <property type="status" value="ALT_INIT"/>
    <property type="molecule type" value="Genomic_DNA"/>
</dbReference>
<dbReference type="SMR" id="Q5M011"/>
<dbReference type="KEGG" id="stc:str0906"/>
<dbReference type="HOGENOM" id="CLU_060216_6_3_9"/>
<dbReference type="GO" id="GO:0005737">
    <property type="term" value="C:cytoplasm"/>
    <property type="evidence" value="ECO:0007669"/>
    <property type="project" value="UniProtKB-SubCell"/>
</dbReference>
<dbReference type="GO" id="GO:0005524">
    <property type="term" value="F:ATP binding"/>
    <property type="evidence" value="ECO:0007669"/>
    <property type="project" value="UniProtKB-UniRule"/>
</dbReference>
<dbReference type="GO" id="GO:0046872">
    <property type="term" value="F:metal ion binding"/>
    <property type="evidence" value="ECO:0007669"/>
    <property type="project" value="UniProtKB-KW"/>
</dbReference>
<dbReference type="GO" id="GO:0004550">
    <property type="term" value="F:nucleoside diphosphate kinase activity"/>
    <property type="evidence" value="ECO:0007669"/>
    <property type="project" value="UniProtKB-UniRule"/>
</dbReference>
<dbReference type="GO" id="GO:0006241">
    <property type="term" value="P:CTP biosynthetic process"/>
    <property type="evidence" value="ECO:0007669"/>
    <property type="project" value="UniProtKB-UniRule"/>
</dbReference>
<dbReference type="GO" id="GO:0006183">
    <property type="term" value="P:GTP biosynthetic process"/>
    <property type="evidence" value="ECO:0007669"/>
    <property type="project" value="UniProtKB-UniRule"/>
</dbReference>
<dbReference type="GO" id="GO:0006228">
    <property type="term" value="P:UTP biosynthetic process"/>
    <property type="evidence" value="ECO:0007669"/>
    <property type="project" value="UniProtKB-UniRule"/>
</dbReference>
<dbReference type="CDD" id="cd04413">
    <property type="entry name" value="NDPk_I"/>
    <property type="match status" value="1"/>
</dbReference>
<dbReference type="FunFam" id="3.30.70.141:FF:000003">
    <property type="entry name" value="Nucleoside diphosphate kinase"/>
    <property type="match status" value="1"/>
</dbReference>
<dbReference type="Gene3D" id="3.30.70.141">
    <property type="entry name" value="Nucleoside diphosphate kinase-like domain"/>
    <property type="match status" value="1"/>
</dbReference>
<dbReference type="HAMAP" id="MF_00451">
    <property type="entry name" value="NDP_kinase"/>
    <property type="match status" value="1"/>
</dbReference>
<dbReference type="InterPro" id="IPR034907">
    <property type="entry name" value="NDK-like_dom"/>
</dbReference>
<dbReference type="InterPro" id="IPR036850">
    <property type="entry name" value="NDK-like_dom_sf"/>
</dbReference>
<dbReference type="InterPro" id="IPR001564">
    <property type="entry name" value="Nucleoside_diP_kinase"/>
</dbReference>
<dbReference type="InterPro" id="IPR023005">
    <property type="entry name" value="Nucleoside_diP_kinase_AS"/>
</dbReference>
<dbReference type="NCBIfam" id="NF001908">
    <property type="entry name" value="PRK00668.1"/>
    <property type="match status" value="1"/>
</dbReference>
<dbReference type="PANTHER" id="PTHR11349">
    <property type="entry name" value="NUCLEOSIDE DIPHOSPHATE KINASE"/>
    <property type="match status" value="1"/>
</dbReference>
<dbReference type="Pfam" id="PF00334">
    <property type="entry name" value="NDK"/>
    <property type="match status" value="1"/>
</dbReference>
<dbReference type="PRINTS" id="PR01243">
    <property type="entry name" value="NUCDPKINASE"/>
</dbReference>
<dbReference type="SMART" id="SM00562">
    <property type="entry name" value="NDK"/>
    <property type="match status" value="1"/>
</dbReference>
<dbReference type="SUPFAM" id="SSF54919">
    <property type="entry name" value="Nucleoside diphosphate kinase, NDK"/>
    <property type="match status" value="1"/>
</dbReference>
<dbReference type="PROSITE" id="PS00469">
    <property type="entry name" value="NDPK"/>
    <property type="match status" value="1"/>
</dbReference>
<dbReference type="PROSITE" id="PS51374">
    <property type="entry name" value="NDPK_LIKE"/>
    <property type="match status" value="1"/>
</dbReference>
<feature type="chain" id="PRO_0000137058" description="Nucleoside diphosphate kinase">
    <location>
        <begin position="1"/>
        <end position="137"/>
    </location>
</feature>
<feature type="active site" description="Pros-phosphohistidine intermediate" evidence="1">
    <location>
        <position position="119"/>
    </location>
</feature>
<feature type="binding site" evidence="1">
    <location>
        <position position="9"/>
    </location>
    <ligand>
        <name>ATP</name>
        <dbReference type="ChEBI" id="CHEBI:30616"/>
    </ligand>
</feature>
<feature type="binding site" evidence="1">
    <location>
        <position position="57"/>
    </location>
    <ligand>
        <name>ATP</name>
        <dbReference type="ChEBI" id="CHEBI:30616"/>
    </ligand>
</feature>
<feature type="binding site" evidence="1">
    <location>
        <position position="85"/>
    </location>
    <ligand>
        <name>ATP</name>
        <dbReference type="ChEBI" id="CHEBI:30616"/>
    </ligand>
</feature>
<feature type="binding site" evidence="1">
    <location>
        <position position="91"/>
    </location>
    <ligand>
        <name>ATP</name>
        <dbReference type="ChEBI" id="CHEBI:30616"/>
    </ligand>
</feature>
<feature type="binding site" evidence="1">
    <location>
        <position position="102"/>
    </location>
    <ligand>
        <name>ATP</name>
        <dbReference type="ChEBI" id="CHEBI:30616"/>
    </ligand>
</feature>
<accession>Q5M011</accession>
<reference key="1">
    <citation type="journal article" date="2004" name="Nat. Biotechnol.">
        <title>Complete sequence and comparative genome analysis of the dairy bacterium Streptococcus thermophilus.</title>
        <authorList>
            <person name="Bolotin A."/>
            <person name="Quinquis B."/>
            <person name="Renault P."/>
            <person name="Sorokin A."/>
            <person name="Ehrlich S.D."/>
            <person name="Kulakauskas S."/>
            <person name="Lapidus A."/>
            <person name="Goltsman E."/>
            <person name="Mazur M."/>
            <person name="Pusch G.D."/>
            <person name="Fonstein M."/>
            <person name="Overbeek R."/>
            <person name="Kyprides N."/>
            <person name="Purnelle B."/>
            <person name="Prozzi D."/>
            <person name="Ngui K."/>
            <person name="Masuy D."/>
            <person name="Hancy F."/>
            <person name="Burteau S."/>
            <person name="Boutry M."/>
            <person name="Delcour J."/>
            <person name="Goffeau A."/>
            <person name="Hols P."/>
        </authorList>
    </citation>
    <scope>NUCLEOTIDE SEQUENCE [LARGE SCALE GENOMIC DNA]</scope>
    <source>
        <strain>CNRZ 1066</strain>
    </source>
</reference>
<comment type="function">
    <text evidence="1">Major role in the synthesis of nucleoside triphosphates other than ATP. The ATP gamma phosphate is transferred to the NDP beta phosphate via a ping-pong mechanism, using a phosphorylated active-site intermediate.</text>
</comment>
<comment type="catalytic activity">
    <reaction evidence="1">
        <text>a 2'-deoxyribonucleoside 5'-diphosphate + ATP = a 2'-deoxyribonucleoside 5'-triphosphate + ADP</text>
        <dbReference type="Rhea" id="RHEA:44640"/>
        <dbReference type="ChEBI" id="CHEBI:30616"/>
        <dbReference type="ChEBI" id="CHEBI:61560"/>
        <dbReference type="ChEBI" id="CHEBI:73316"/>
        <dbReference type="ChEBI" id="CHEBI:456216"/>
        <dbReference type="EC" id="2.7.4.6"/>
    </reaction>
</comment>
<comment type="catalytic activity">
    <reaction evidence="1">
        <text>a ribonucleoside 5'-diphosphate + ATP = a ribonucleoside 5'-triphosphate + ADP</text>
        <dbReference type="Rhea" id="RHEA:18113"/>
        <dbReference type="ChEBI" id="CHEBI:30616"/>
        <dbReference type="ChEBI" id="CHEBI:57930"/>
        <dbReference type="ChEBI" id="CHEBI:61557"/>
        <dbReference type="ChEBI" id="CHEBI:456216"/>
        <dbReference type="EC" id="2.7.4.6"/>
    </reaction>
</comment>
<comment type="cofactor">
    <cofactor evidence="1">
        <name>Mg(2+)</name>
        <dbReference type="ChEBI" id="CHEBI:18420"/>
    </cofactor>
</comment>
<comment type="subunit">
    <text evidence="1">Homotetramer.</text>
</comment>
<comment type="subcellular location">
    <subcellularLocation>
        <location evidence="1">Cytoplasm</location>
    </subcellularLocation>
</comment>
<comment type="similarity">
    <text evidence="1">Belongs to the NDK family.</text>
</comment>
<comment type="sequence caution" evidence="2">
    <conflict type="erroneous initiation">
        <sequence resource="EMBL-CDS" id="AAV62492"/>
    </conflict>
</comment>
<evidence type="ECO:0000255" key="1">
    <source>
        <dbReference type="HAMAP-Rule" id="MF_00451"/>
    </source>
</evidence>
<evidence type="ECO:0000305" key="2"/>
<proteinExistence type="inferred from homology"/>
<name>NDK_STRT1</name>
<sequence>MQKTFFIIKPDAVKRHLIGQVLDRIERRGFVIERMEMLMLDEERLKEHYAQLADKPFFPSISEFMMSGPAVIGIMSGPGVIKSWRDMMGATNPGDAAPGTIRGDFATAPDGDMIPNIVHGSDSEESAAREIKIWFGE</sequence>
<keyword id="KW-0067">ATP-binding</keyword>
<keyword id="KW-0963">Cytoplasm</keyword>
<keyword id="KW-0418">Kinase</keyword>
<keyword id="KW-0460">Magnesium</keyword>
<keyword id="KW-0479">Metal-binding</keyword>
<keyword id="KW-0546">Nucleotide metabolism</keyword>
<keyword id="KW-0547">Nucleotide-binding</keyword>
<keyword id="KW-0597">Phosphoprotein</keyword>
<keyword id="KW-0808">Transferase</keyword>
<organism>
    <name type="scientific">Streptococcus thermophilus (strain CNRZ 1066)</name>
    <dbReference type="NCBI Taxonomy" id="299768"/>
    <lineage>
        <taxon>Bacteria</taxon>
        <taxon>Bacillati</taxon>
        <taxon>Bacillota</taxon>
        <taxon>Bacilli</taxon>
        <taxon>Lactobacillales</taxon>
        <taxon>Streptococcaceae</taxon>
        <taxon>Streptococcus</taxon>
    </lineage>
</organism>